<keyword id="KW-0002">3D-structure</keyword>
<keyword id="KW-0238">DNA-binding</keyword>
<keyword id="KW-0539">Nucleus</keyword>
<keyword id="KW-1185">Reference proteome</keyword>
<keyword id="KW-0804">Transcription</keyword>
<keyword id="KW-0805">Transcription regulation</keyword>
<sequence>MKLEVFAPRAAHGDKMGSDLEGAGSSDVPSPLSAAGDDSLGSDGDCAANSPAAGSGAGDLEGGGGERNSSGGASTQDDPEVTDGSRTQASPVGPCAGSVGGGEGARSKPYTRRPKPPYSYIALIAMAIRDSAGGRLTLAEINEYLMGKFPFFRGSYTGWRNSVRHNLSLNDCFVKVLRDPSRPWGKDNYWMLNPNSEYTFADGVFRRRRKRLSHRTTVSASGYGGGSPPGPAGTPQPAPTAGSSPIARSPARQEEGSSPASKFSSSFAIDSILSKPFRSRRDGTPALGVQLPWSAAPCPPLRAYPALLPASSGGALLPLCAYGAAEPTLLASRGAEVQPAAPLFVAPLSTAAPAKPFRGPETAGAAHLYCPLRLPTALQAAAACGPGPHLSYRVETLLA</sequence>
<proteinExistence type="evidence at protein level"/>
<reference key="1">
    <citation type="journal article" date="2004" name="Invest. Ophthalmol. Vis. Sci.">
        <title>Gene expression profile of the rat eye iridocorneal angle: NEIBank expressed sequence tag analysis.</title>
        <authorList>
            <person name="Ahmed F."/>
            <person name="Torrado M."/>
            <person name="Zinovieva R.D."/>
            <person name="Senatorov V.V."/>
            <person name="Wistow G."/>
            <person name="Tomarev S.I."/>
        </authorList>
    </citation>
    <scope>NUCLEOTIDE SEQUENCE [LARGE SCALE MRNA] OF 1-65</scope>
    <source>
        <strain>Wistar</strain>
    </source>
</reference>
<reference key="2">
    <citation type="journal article" date="1993" name="Proc. Natl. Acad. Sci. U.S.A.">
        <title>Identification of nine tissue-specific transcription factors of the hepatocyte nuclear factor 3/forkhead DNA-binding-domain family.</title>
        <authorList>
            <person name="Clevidence D.E."/>
            <person name="Overdier D.G."/>
            <person name="Tao W."/>
            <person name="Qian X."/>
            <person name="Pani L."/>
            <person name="Lai E."/>
            <person name="Costa R.H."/>
        </authorList>
    </citation>
    <scope>NUCLEOTIDE SEQUENCE [MRNA] OF 8-399</scope>
    <source>
        <strain>Sprague-Dawley</strain>
        <tissue>Lung</tissue>
    </source>
</reference>
<feature type="chain" id="PRO_0000091892" description="Forkhead box protein Q1">
    <location>
        <begin position="1"/>
        <end position="399"/>
    </location>
</feature>
<feature type="DNA-binding region" description="Fork-head" evidence="2">
    <location>
        <begin position="114"/>
        <end position="205"/>
    </location>
</feature>
<feature type="region of interest" description="Disordered" evidence="3">
    <location>
        <begin position="1"/>
        <end position="112"/>
    </location>
</feature>
<feature type="region of interest" description="Disordered" evidence="3">
    <location>
        <begin position="211"/>
        <end position="263"/>
    </location>
</feature>
<feature type="compositionally biased region" description="Low complexity" evidence="3">
    <location>
        <begin position="32"/>
        <end position="54"/>
    </location>
</feature>
<feature type="compositionally biased region" description="Gly residues" evidence="3">
    <location>
        <begin position="55"/>
        <end position="66"/>
    </location>
</feature>
<feature type="compositionally biased region" description="Pro residues" evidence="3">
    <location>
        <begin position="228"/>
        <end position="238"/>
    </location>
</feature>
<feature type="sequence conflict" description="In Ref. 1; DV214562." evidence="4" ref="1">
    <original>G</original>
    <variation>S</variation>
    <location>
        <position position="41"/>
    </location>
</feature>
<feature type="sequence conflict" description="In Ref. 1; DV214562." evidence="4" ref="1">
    <original>SGAG</original>
    <variation>RSAV</variation>
    <location>
        <begin position="55"/>
        <end position="58"/>
    </location>
</feature>
<feature type="sequence conflict" description="In Ref. 1; DV214562." evidence="4" ref="1">
    <original>G</original>
    <variation>S</variation>
    <location>
        <position position="62"/>
    </location>
</feature>
<feature type="helix" evidence="5">
    <location>
        <begin position="121"/>
        <end position="128"/>
    </location>
</feature>
<feature type="strand" evidence="5">
    <location>
        <begin position="131"/>
        <end position="134"/>
    </location>
</feature>
<feature type="helix" evidence="5">
    <location>
        <begin position="138"/>
        <end position="148"/>
    </location>
</feature>
<feature type="helix" evidence="5">
    <location>
        <begin position="152"/>
        <end position="154"/>
    </location>
</feature>
<feature type="helix" evidence="5">
    <location>
        <begin position="160"/>
        <end position="170"/>
    </location>
</feature>
<feature type="strand" evidence="5">
    <location>
        <begin position="183"/>
        <end position="185"/>
    </location>
</feature>
<evidence type="ECO:0000250" key="1"/>
<evidence type="ECO:0000255" key="2">
    <source>
        <dbReference type="PROSITE-ProRule" id="PRU00089"/>
    </source>
</evidence>
<evidence type="ECO:0000256" key="3">
    <source>
        <dbReference type="SAM" id="MobiDB-lite"/>
    </source>
</evidence>
<evidence type="ECO:0000305" key="4"/>
<evidence type="ECO:0007829" key="5">
    <source>
        <dbReference type="PDB" id="1KQ8"/>
    </source>
</evidence>
<comment type="function">
    <text evidence="1">Plays a role in hair follicle differentiation.</text>
</comment>
<comment type="subcellular location">
    <subcellularLocation>
        <location>Nucleus</location>
    </subcellularLocation>
</comment>
<comment type="sequence caution" evidence="4">
    <conflict type="frameshift">
        <sequence resource="EMBL-CDS" id="AAA74561"/>
    </conflict>
</comment>
<name>FOXQ1_RAT</name>
<accession>Q63244</accession>
<gene>
    <name type="primary">Foxq1</name>
    <name type="synonym">Hfh1</name>
</gene>
<protein>
    <recommendedName>
        <fullName>Forkhead box protein Q1</fullName>
    </recommendedName>
    <alternativeName>
        <fullName>HNF-3/forkhead-like protein 1</fullName>
        <shortName>HFH-1</shortName>
    </alternativeName>
    <alternativeName>
        <fullName>Hepatocyte nuclear factor 3 forkhead homolog 1</fullName>
    </alternativeName>
</protein>
<organism>
    <name type="scientific">Rattus norvegicus</name>
    <name type="common">Rat</name>
    <dbReference type="NCBI Taxonomy" id="10116"/>
    <lineage>
        <taxon>Eukaryota</taxon>
        <taxon>Metazoa</taxon>
        <taxon>Chordata</taxon>
        <taxon>Craniata</taxon>
        <taxon>Vertebrata</taxon>
        <taxon>Euteleostomi</taxon>
        <taxon>Mammalia</taxon>
        <taxon>Eutheria</taxon>
        <taxon>Euarchontoglires</taxon>
        <taxon>Glires</taxon>
        <taxon>Rodentia</taxon>
        <taxon>Myomorpha</taxon>
        <taxon>Muroidea</taxon>
        <taxon>Muridae</taxon>
        <taxon>Murinae</taxon>
        <taxon>Rattus</taxon>
    </lineage>
</organism>
<dbReference type="EMBL" id="DV214562">
    <property type="status" value="NOT_ANNOTATED_CDS"/>
    <property type="molecule type" value="mRNA"/>
</dbReference>
<dbReference type="EMBL" id="L13201">
    <property type="protein sequence ID" value="AAA74561.1"/>
    <property type="status" value="ALT_FRAME"/>
    <property type="molecule type" value="mRNA"/>
</dbReference>
<dbReference type="PIR" id="I60916">
    <property type="entry name" value="I60916"/>
</dbReference>
<dbReference type="PDB" id="1KQ8">
    <property type="method" value="NMR"/>
    <property type="chains" value="A=114-213"/>
</dbReference>
<dbReference type="PDBsum" id="1KQ8"/>
<dbReference type="SMR" id="Q63244"/>
<dbReference type="FunCoup" id="Q63244">
    <property type="interactions" value="25"/>
</dbReference>
<dbReference type="GlyGen" id="Q63244">
    <property type="glycosylation" value="1 site"/>
</dbReference>
<dbReference type="PhosphoSitePlus" id="Q63244"/>
<dbReference type="UCSC" id="RGD:621572">
    <property type="organism name" value="rat"/>
</dbReference>
<dbReference type="AGR" id="RGD:621572"/>
<dbReference type="RGD" id="621572">
    <property type="gene designation" value="Foxq1"/>
</dbReference>
<dbReference type="InParanoid" id="Q63244"/>
<dbReference type="PhylomeDB" id="Q63244"/>
<dbReference type="EvolutionaryTrace" id="Q63244"/>
<dbReference type="PRO" id="PR:Q63244"/>
<dbReference type="Proteomes" id="UP000002494">
    <property type="component" value="Unplaced"/>
</dbReference>
<dbReference type="GO" id="GO:0005634">
    <property type="term" value="C:nucleus"/>
    <property type="evidence" value="ECO:0007669"/>
    <property type="project" value="UniProtKB-SubCell"/>
</dbReference>
<dbReference type="GO" id="GO:0000981">
    <property type="term" value="F:DNA-binding transcription factor activity, RNA polymerase II-specific"/>
    <property type="evidence" value="ECO:0000318"/>
    <property type="project" value="GO_Central"/>
</dbReference>
<dbReference type="GO" id="GO:0001227">
    <property type="term" value="F:DNA-binding transcription repressor activity, RNA polymerase II-specific"/>
    <property type="evidence" value="ECO:0000266"/>
    <property type="project" value="RGD"/>
</dbReference>
<dbReference type="GO" id="GO:0000978">
    <property type="term" value="F:RNA polymerase II cis-regulatory region sequence-specific DNA binding"/>
    <property type="evidence" value="ECO:0000266"/>
    <property type="project" value="RGD"/>
</dbReference>
<dbReference type="GO" id="GO:1990837">
    <property type="term" value="F:sequence-specific double-stranded DNA binding"/>
    <property type="evidence" value="ECO:0000266"/>
    <property type="project" value="RGD"/>
</dbReference>
<dbReference type="GO" id="GO:0009653">
    <property type="term" value="P:anatomical structure morphogenesis"/>
    <property type="evidence" value="ECO:0000318"/>
    <property type="project" value="GO_Central"/>
</dbReference>
<dbReference type="GO" id="GO:0030154">
    <property type="term" value="P:cell differentiation"/>
    <property type="evidence" value="ECO:0000318"/>
    <property type="project" value="GO_Central"/>
</dbReference>
<dbReference type="GO" id="GO:0031069">
    <property type="term" value="P:hair follicle morphogenesis"/>
    <property type="evidence" value="ECO:0000266"/>
    <property type="project" value="RGD"/>
</dbReference>
<dbReference type="GO" id="GO:0000122">
    <property type="term" value="P:negative regulation of transcription by RNA polymerase II"/>
    <property type="evidence" value="ECO:0000266"/>
    <property type="project" value="RGD"/>
</dbReference>
<dbReference type="GO" id="GO:0006357">
    <property type="term" value="P:regulation of transcription by RNA polymerase II"/>
    <property type="evidence" value="ECO:0000318"/>
    <property type="project" value="GO_Central"/>
</dbReference>
<dbReference type="CDD" id="cd20034">
    <property type="entry name" value="FH_FOXQ1-like"/>
    <property type="match status" value="1"/>
</dbReference>
<dbReference type="FunFam" id="1.10.10.10:FF:000071">
    <property type="entry name" value="Forkhead box F1"/>
    <property type="match status" value="1"/>
</dbReference>
<dbReference type="Gene3D" id="1.10.10.10">
    <property type="entry name" value="Winged helix-like DNA-binding domain superfamily/Winged helix DNA-binding domain"/>
    <property type="match status" value="1"/>
</dbReference>
<dbReference type="InterPro" id="IPR047518">
    <property type="entry name" value="FH_FOXQ1"/>
</dbReference>
<dbReference type="InterPro" id="IPR001766">
    <property type="entry name" value="Fork_head_dom"/>
</dbReference>
<dbReference type="InterPro" id="IPR050211">
    <property type="entry name" value="FOX_domain-containing"/>
</dbReference>
<dbReference type="InterPro" id="IPR018122">
    <property type="entry name" value="TF_fork_head_CS_1"/>
</dbReference>
<dbReference type="InterPro" id="IPR030456">
    <property type="entry name" value="TF_fork_head_CS_2"/>
</dbReference>
<dbReference type="InterPro" id="IPR036388">
    <property type="entry name" value="WH-like_DNA-bd_sf"/>
</dbReference>
<dbReference type="InterPro" id="IPR036390">
    <property type="entry name" value="WH_DNA-bd_sf"/>
</dbReference>
<dbReference type="PANTHER" id="PTHR11829">
    <property type="entry name" value="FORKHEAD BOX PROTEIN"/>
    <property type="match status" value="1"/>
</dbReference>
<dbReference type="PANTHER" id="PTHR11829:SF206">
    <property type="entry name" value="FORKHEAD BOX PROTEIN Q1"/>
    <property type="match status" value="1"/>
</dbReference>
<dbReference type="Pfam" id="PF00250">
    <property type="entry name" value="Forkhead"/>
    <property type="match status" value="1"/>
</dbReference>
<dbReference type="PRINTS" id="PR00053">
    <property type="entry name" value="FORKHEAD"/>
</dbReference>
<dbReference type="SMART" id="SM00339">
    <property type="entry name" value="FH"/>
    <property type="match status" value="1"/>
</dbReference>
<dbReference type="SUPFAM" id="SSF46785">
    <property type="entry name" value="Winged helix' DNA-binding domain"/>
    <property type="match status" value="1"/>
</dbReference>
<dbReference type="PROSITE" id="PS00657">
    <property type="entry name" value="FORK_HEAD_1"/>
    <property type="match status" value="1"/>
</dbReference>
<dbReference type="PROSITE" id="PS00658">
    <property type="entry name" value="FORK_HEAD_2"/>
    <property type="match status" value="1"/>
</dbReference>
<dbReference type="PROSITE" id="PS50039">
    <property type="entry name" value="FORK_HEAD_3"/>
    <property type="match status" value="1"/>
</dbReference>